<organism>
    <name type="scientific">Sulfurimonas denitrificans (strain ATCC 33889 / DSM 1251)</name>
    <name type="common">Thiomicrospira denitrificans (strain ATCC 33889 / DSM 1251)</name>
    <dbReference type="NCBI Taxonomy" id="326298"/>
    <lineage>
        <taxon>Bacteria</taxon>
        <taxon>Pseudomonadati</taxon>
        <taxon>Campylobacterota</taxon>
        <taxon>Epsilonproteobacteria</taxon>
        <taxon>Campylobacterales</taxon>
        <taxon>Sulfurimonadaceae</taxon>
        <taxon>Sulfurimonas</taxon>
    </lineage>
</organism>
<name>ISPH_SULDN</name>
<protein>
    <recommendedName>
        <fullName evidence="1">4-hydroxy-3-methylbut-2-enyl diphosphate reductase</fullName>
        <shortName evidence="1">HMBPP reductase</shortName>
        <ecNumber evidence="1">1.17.7.4</ecNumber>
    </recommendedName>
</protein>
<gene>
    <name evidence="1" type="primary">ispH</name>
    <name type="ordered locus">Suden_0872</name>
</gene>
<sequence length="275" mass="30963">MKIELAESYGFCFGVKRAIKIAEDNKNSSTYGPLIHNSKEIERLEKDFKVGLTDDHKSFASGDKAVIRTHGIPKNELAELKANNVDVVDATCPYVTKPQQICQEMSEQGYEIIIFGDDAHPEIKGVKSYATYGARVVTMPSELEDLKLKDRIALVAQTTRKVEDYLEIANYLIPRYKEVRVFNTICNATFENQEAVRKISKKADIMIIIGGKNSSNTKQLFSISEDNCTDSYHIEDENDLDFSWFKEKKFCGISAGASTPDWIIQNVVNAIQNSI</sequence>
<reference key="1">
    <citation type="journal article" date="2008" name="Appl. Environ. Microbiol.">
        <title>Genome of the epsilonproteobacterial chemolithoautotroph Sulfurimonas denitrificans.</title>
        <authorList>
            <person name="Sievert S.M."/>
            <person name="Scott K.M."/>
            <person name="Klotz M.G."/>
            <person name="Chain P.S.G."/>
            <person name="Hauser L.J."/>
            <person name="Hemp J."/>
            <person name="Huegler M."/>
            <person name="Land M."/>
            <person name="Lapidus A."/>
            <person name="Larimer F.W."/>
            <person name="Lucas S."/>
            <person name="Malfatti S.A."/>
            <person name="Meyer F."/>
            <person name="Paulsen I.T."/>
            <person name="Ren Q."/>
            <person name="Simon J."/>
            <person name="Bailey K."/>
            <person name="Diaz E."/>
            <person name="Fitzpatrick K.A."/>
            <person name="Glover B."/>
            <person name="Gwatney N."/>
            <person name="Korajkic A."/>
            <person name="Long A."/>
            <person name="Mobberley J.M."/>
            <person name="Pantry S.N."/>
            <person name="Pazder G."/>
            <person name="Peterson S."/>
            <person name="Quintanilla J.D."/>
            <person name="Sprinkle R."/>
            <person name="Stephens J."/>
            <person name="Thomas P."/>
            <person name="Vaughn R."/>
            <person name="Weber M.J."/>
            <person name="Wooten L.L."/>
        </authorList>
    </citation>
    <scope>NUCLEOTIDE SEQUENCE [LARGE SCALE GENOMIC DNA]</scope>
    <source>
        <strain>ATCC 33889 / DSM 1251</strain>
    </source>
</reference>
<accession>Q30S81</accession>
<keyword id="KW-0004">4Fe-4S</keyword>
<keyword id="KW-0408">Iron</keyword>
<keyword id="KW-0411">Iron-sulfur</keyword>
<keyword id="KW-0414">Isoprene biosynthesis</keyword>
<keyword id="KW-0479">Metal-binding</keyword>
<keyword id="KW-0560">Oxidoreductase</keyword>
<keyword id="KW-1185">Reference proteome</keyword>
<proteinExistence type="inferred from homology"/>
<evidence type="ECO:0000255" key="1">
    <source>
        <dbReference type="HAMAP-Rule" id="MF_00191"/>
    </source>
</evidence>
<dbReference type="EC" id="1.17.7.4" evidence="1"/>
<dbReference type="EMBL" id="CP000153">
    <property type="protein sequence ID" value="ABB44150.1"/>
    <property type="molecule type" value="Genomic_DNA"/>
</dbReference>
<dbReference type="RefSeq" id="WP_011372502.1">
    <property type="nucleotide sequence ID" value="NC_007575.1"/>
</dbReference>
<dbReference type="SMR" id="Q30S81"/>
<dbReference type="STRING" id="326298.Suden_0872"/>
<dbReference type="KEGG" id="tdn:Suden_0872"/>
<dbReference type="eggNOG" id="COG0761">
    <property type="taxonomic scope" value="Bacteria"/>
</dbReference>
<dbReference type="HOGENOM" id="CLU_027486_0_1_7"/>
<dbReference type="OrthoDB" id="9804068at2"/>
<dbReference type="UniPathway" id="UPA00056">
    <property type="reaction ID" value="UER00097"/>
</dbReference>
<dbReference type="UniPathway" id="UPA00059">
    <property type="reaction ID" value="UER00105"/>
</dbReference>
<dbReference type="Proteomes" id="UP000002714">
    <property type="component" value="Chromosome"/>
</dbReference>
<dbReference type="GO" id="GO:0051539">
    <property type="term" value="F:4 iron, 4 sulfur cluster binding"/>
    <property type="evidence" value="ECO:0007669"/>
    <property type="project" value="UniProtKB-UniRule"/>
</dbReference>
<dbReference type="GO" id="GO:0051745">
    <property type="term" value="F:4-hydroxy-3-methylbut-2-enyl diphosphate reductase activity"/>
    <property type="evidence" value="ECO:0007669"/>
    <property type="project" value="UniProtKB-UniRule"/>
</dbReference>
<dbReference type="GO" id="GO:0046872">
    <property type="term" value="F:metal ion binding"/>
    <property type="evidence" value="ECO:0007669"/>
    <property type="project" value="UniProtKB-KW"/>
</dbReference>
<dbReference type="GO" id="GO:0050992">
    <property type="term" value="P:dimethylallyl diphosphate biosynthetic process"/>
    <property type="evidence" value="ECO:0007669"/>
    <property type="project" value="UniProtKB-UniRule"/>
</dbReference>
<dbReference type="GO" id="GO:0019288">
    <property type="term" value="P:isopentenyl diphosphate biosynthetic process, methylerythritol 4-phosphate pathway"/>
    <property type="evidence" value="ECO:0007669"/>
    <property type="project" value="UniProtKB-UniRule"/>
</dbReference>
<dbReference type="GO" id="GO:0016114">
    <property type="term" value="P:terpenoid biosynthetic process"/>
    <property type="evidence" value="ECO:0007669"/>
    <property type="project" value="UniProtKB-UniRule"/>
</dbReference>
<dbReference type="CDD" id="cd13944">
    <property type="entry name" value="lytB_ispH"/>
    <property type="match status" value="1"/>
</dbReference>
<dbReference type="Gene3D" id="3.40.50.11270">
    <property type="match status" value="1"/>
</dbReference>
<dbReference type="Gene3D" id="3.40.1010.20">
    <property type="entry name" value="4-hydroxy-3-methylbut-2-enyl diphosphate reductase, catalytic domain"/>
    <property type="match status" value="2"/>
</dbReference>
<dbReference type="HAMAP" id="MF_00191">
    <property type="entry name" value="IspH"/>
    <property type="match status" value="1"/>
</dbReference>
<dbReference type="InterPro" id="IPR003451">
    <property type="entry name" value="LytB/IspH"/>
</dbReference>
<dbReference type="NCBIfam" id="TIGR00216">
    <property type="entry name" value="ispH_lytB"/>
    <property type="match status" value="1"/>
</dbReference>
<dbReference type="NCBIfam" id="NF002187">
    <property type="entry name" value="PRK01045.1-1"/>
    <property type="match status" value="1"/>
</dbReference>
<dbReference type="PANTHER" id="PTHR30426">
    <property type="entry name" value="4-HYDROXY-3-METHYLBUT-2-ENYL DIPHOSPHATE REDUCTASE"/>
    <property type="match status" value="1"/>
</dbReference>
<dbReference type="PANTHER" id="PTHR30426:SF0">
    <property type="entry name" value="4-HYDROXY-3-METHYLBUT-2-ENYL DIPHOSPHATE REDUCTASE"/>
    <property type="match status" value="1"/>
</dbReference>
<dbReference type="Pfam" id="PF02401">
    <property type="entry name" value="LYTB"/>
    <property type="match status" value="1"/>
</dbReference>
<comment type="function">
    <text evidence="1">Catalyzes the conversion of 1-hydroxy-2-methyl-2-(E)-butenyl 4-diphosphate (HMBPP) into a mixture of isopentenyl diphosphate (IPP) and dimethylallyl diphosphate (DMAPP). Acts in the terminal step of the DOXP/MEP pathway for isoprenoid precursor biosynthesis.</text>
</comment>
<comment type="catalytic activity">
    <reaction evidence="1">
        <text>isopentenyl diphosphate + 2 oxidized [2Fe-2S]-[ferredoxin] + H2O = (2E)-4-hydroxy-3-methylbut-2-enyl diphosphate + 2 reduced [2Fe-2S]-[ferredoxin] + 2 H(+)</text>
        <dbReference type="Rhea" id="RHEA:24488"/>
        <dbReference type="Rhea" id="RHEA-COMP:10000"/>
        <dbReference type="Rhea" id="RHEA-COMP:10001"/>
        <dbReference type="ChEBI" id="CHEBI:15377"/>
        <dbReference type="ChEBI" id="CHEBI:15378"/>
        <dbReference type="ChEBI" id="CHEBI:33737"/>
        <dbReference type="ChEBI" id="CHEBI:33738"/>
        <dbReference type="ChEBI" id="CHEBI:128753"/>
        <dbReference type="ChEBI" id="CHEBI:128769"/>
        <dbReference type="EC" id="1.17.7.4"/>
    </reaction>
</comment>
<comment type="catalytic activity">
    <reaction evidence="1">
        <text>dimethylallyl diphosphate + 2 oxidized [2Fe-2S]-[ferredoxin] + H2O = (2E)-4-hydroxy-3-methylbut-2-enyl diphosphate + 2 reduced [2Fe-2S]-[ferredoxin] + 2 H(+)</text>
        <dbReference type="Rhea" id="RHEA:24825"/>
        <dbReference type="Rhea" id="RHEA-COMP:10000"/>
        <dbReference type="Rhea" id="RHEA-COMP:10001"/>
        <dbReference type="ChEBI" id="CHEBI:15377"/>
        <dbReference type="ChEBI" id="CHEBI:15378"/>
        <dbReference type="ChEBI" id="CHEBI:33737"/>
        <dbReference type="ChEBI" id="CHEBI:33738"/>
        <dbReference type="ChEBI" id="CHEBI:57623"/>
        <dbReference type="ChEBI" id="CHEBI:128753"/>
        <dbReference type="EC" id="1.17.7.4"/>
    </reaction>
</comment>
<comment type="cofactor">
    <cofactor evidence="1">
        <name>[4Fe-4S] cluster</name>
        <dbReference type="ChEBI" id="CHEBI:49883"/>
    </cofactor>
    <text evidence="1">Binds 1 [4Fe-4S] cluster per subunit.</text>
</comment>
<comment type="pathway">
    <text evidence="1">Isoprenoid biosynthesis; dimethylallyl diphosphate biosynthesis; dimethylallyl diphosphate from (2E)-4-hydroxy-3-methylbutenyl diphosphate: step 1/1.</text>
</comment>
<comment type="pathway">
    <text evidence="1">Isoprenoid biosynthesis; isopentenyl diphosphate biosynthesis via DXP pathway; isopentenyl diphosphate from 1-deoxy-D-xylulose 5-phosphate: step 6/6.</text>
</comment>
<comment type="similarity">
    <text evidence="1">Belongs to the IspH family.</text>
</comment>
<feature type="chain" id="PRO_1000021191" description="4-hydroxy-3-methylbut-2-enyl diphosphate reductase">
    <location>
        <begin position="1"/>
        <end position="275"/>
    </location>
</feature>
<feature type="active site" description="Proton donor" evidence="1">
    <location>
        <position position="122"/>
    </location>
</feature>
<feature type="binding site" evidence="1">
    <location>
        <position position="12"/>
    </location>
    <ligand>
        <name>[4Fe-4S] cluster</name>
        <dbReference type="ChEBI" id="CHEBI:49883"/>
    </ligand>
</feature>
<feature type="binding site" evidence="1">
    <location>
        <position position="36"/>
    </location>
    <ligand>
        <name>(2E)-4-hydroxy-3-methylbut-2-enyl diphosphate</name>
        <dbReference type="ChEBI" id="CHEBI:128753"/>
    </ligand>
</feature>
<feature type="binding site" evidence="1">
    <location>
        <position position="36"/>
    </location>
    <ligand>
        <name>dimethylallyl diphosphate</name>
        <dbReference type="ChEBI" id="CHEBI:57623"/>
    </ligand>
</feature>
<feature type="binding site" evidence="1">
    <location>
        <position position="36"/>
    </location>
    <ligand>
        <name>isopentenyl diphosphate</name>
        <dbReference type="ChEBI" id="CHEBI:128769"/>
    </ligand>
</feature>
<feature type="binding site" evidence="1">
    <location>
        <position position="70"/>
    </location>
    <ligand>
        <name>(2E)-4-hydroxy-3-methylbut-2-enyl diphosphate</name>
        <dbReference type="ChEBI" id="CHEBI:128753"/>
    </ligand>
</feature>
<feature type="binding site" evidence="1">
    <location>
        <position position="70"/>
    </location>
    <ligand>
        <name>dimethylallyl diphosphate</name>
        <dbReference type="ChEBI" id="CHEBI:57623"/>
    </ligand>
</feature>
<feature type="binding site" evidence="1">
    <location>
        <position position="70"/>
    </location>
    <ligand>
        <name>isopentenyl diphosphate</name>
        <dbReference type="ChEBI" id="CHEBI:128769"/>
    </ligand>
</feature>
<feature type="binding site" evidence="1">
    <location>
        <position position="92"/>
    </location>
    <ligand>
        <name>[4Fe-4S] cluster</name>
        <dbReference type="ChEBI" id="CHEBI:49883"/>
    </ligand>
</feature>
<feature type="binding site" evidence="1">
    <location>
        <position position="120"/>
    </location>
    <ligand>
        <name>(2E)-4-hydroxy-3-methylbut-2-enyl diphosphate</name>
        <dbReference type="ChEBI" id="CHEBI:128753"/>
    </ligand>
</feature>
<feature type="binding site" evidence="1">
    <location>
        <position position="120"/>
    </location>
    <ligand>
        <name>dimethylallyl diphosphate</name>
        <dbReference type="ChEBI" id="CHEBI:57623"/>
    </ligand>
</feature>
<feature type="binding site" evidence="1">
    <location>
        <position position="120"/>
    </location>
    <ligand>
        <name>isopentenyl diphosphate</name>
        <dbReference type="ChEBI" id="CHEBI:128769"/>
    </ligand>
</feature>
<feature type="binding site" evidence="1">
    <location>
        <position position="158"/>
    </location>
    <ligand>
        <name>(2E)-4-hydroxy-3-methylbut-2-enyl diphosphate</name>
        <dbReference type="ChEBI" id="CHEBI:128753"/>
    </ligand>
</feature>
<feature type="binding site" evidence="1">
    <location>
        <position position="186"/>
    </location>
    <ligand>
        <name>[4Fe-4S] cluster</name>
        <dbReference type="ChEBI" id="CHEBI:49883"/>
    </ligand>
</feature>
<feature type="binding site" evidence="1">
    <location>
        <position position="214"/>
    </location>
    <ligand>
        <name>(2E)-4-hydroxy-3-methylbut-2-enyl diphosphate</name>
        <dbReference type="ChEBI" id="CHEBI:128753"/>
    </ligand>
</feature>
<feature type="binding site" evidence="1">
    <location>
        <position position="214"/>
    </location>
    <ligand>
        <name>dimethylallyl diphosphate</name>
        <dbReference type="ChEBI" id="CHEBI:57623"/>
    </ligand>
</feature>
<feature type="binding site" evidence="1">
    <location>
        <position position="214"/>
    </location>
    <ligand>
        <name>isopentenyl diphosphate</name>
        <dbReference type="ChEBI" id="CHEBI:128769"/>
    </ligand>
</feature>
<feature type="binding site" evidence="1">
    <location>
        <position position="215"/>
    </location>
    <ligand>
        <name>(2E)-4-hydroxy-3-methylbut-2-enyl diphosphate</name>
        <dbReference type="ChEBI" id="CHEBI:128753"/>
    </ligand>
</feature>
<feature type="binding site" evidence="1">
    <location>
        <position position="215"/>
    </location>
    <ligand>
        <name>dimethylallyl diphosphate</name>
        <dbReference type="ChEBI" id="CHEBI:57623"/>
    </ligand>
</feature>
<feature type="binding site" evidence="1">
    <location>
        <position position="215"/>
    </location>
    <ligand>
        <name>isopentenyl diphosphate</name>
        <dbReference type="ChEBI" id="CHEBI:128769"/>
    </ligand>
</feature>
<feature type="binding site" evidence="1">
    <location>
        <position position="216"/>
    </location>
    <ligand>
        <name>(2E)-4-hydroxy-3-methylbut-2-enyl diphosphate</name>
        <dbReference type="ChEBI" id="CHEBI:128753"/>
    </ligand>
</feature>
<feature type="binding site" evidence="1">
    <location>
        <position position="216"/>
    </location>
    <ligand>
        <name>dimethylallyl diphosphate</name>
        <dbReference type="ChEBI" id="CHEBI:57623"/>
    </ligand>
</feature>
<feature type="binding site" evidence="1">
    <location>
        <position position="216"/>
    </location>
    <ligand>
        <name>isopentenyl diphosphate</name>
        <dbReference type="ChEBI" id="CHEBI:128769"/>
    </ligand>
</feature>
<feature type="binding site" evidence="1">
    <location>
        <position position="258"/>
    </location>
    <ligand>
        <name>(2E)-4-hydroxy-3-methylbut-2-enyl diphosphate</name>
        <dbReference type="ChEBI" id="CHEBI:128753"/>
    </ligand>
</feature>
<feature type="binding site" evidence="1">
    <location>
        <position position="258"/>
    </location>
    <ligand>
        <name>dimethylallyl diphosphate</name>
        <dbReference type="ChEBI" id="CHEBI:57623"/>
    </ligand>
</feature>
<feature type="binding site" evidence="1">
    <location>
        <position position="258"/>
    </location>
    <ligand>
        <name>isopentenyl diphosphate</name>
        <dbReference type="ChEBI" id="CHEBI:128769"/>
    </ligand>
</feature>